<keyword id="KW-0067">ATP-binding</keyword>
<keyword id="KW-0418">Kinase</keyword>
<keyword id="KW-0547">Nucleotide-binding</keyword>
<keyword id="KW-1185">Reference proteome</keyword>
<keyword id="KW-0723">Serine/threonine-protein kinase</keyword>
<keyword id="KW-0808">Transferase</keyword>
<gene>
    <name type="primary">rsbW</name>
    <name type="ordered locus">SAOUHSC_02299</name>
</gene>
<organism>
    <name type="scientific">Staphylococcus aureus (strain NCTC 8325 / PS 47)</name>
    <dbReference type="NCBI Taxonomy" id="93061"/>
    <lineage>
        <taxon>Bacteria</taxon>
        <taxon>Bacillati</taxon>
        <taxon>Bacillota</taxon>
        <taxon>Bacilli</taxon>
        <taxon>Bacillales</taxon>
        <taxon>Staphylococcaceae</taxon>
        <taxon>Staphylococcus</taxon>
    </lineage>
</organism>
<dbReference type="EC" id="2.7.11.1"/>
<dbReference type="EMBL" id="Y07645">
    <property type="protein sequence ID" value="CAA68931.1"/>
    <property type="molecule type" value="Genomic_DNA"/>
</dbReference>
<dbReference type="EMBL" id="AY197751">
    <property type="protein sequence ID" value="AAP42788.1"/>
    <property type="molecule type" value="Genomic_DNA"/>
</dbReference>
<dbReference type="EMBL" id="CP000253">
    <property type="protein sequence ID" value="ABD31333.1"/>
    <property type="status" value="ALT_INIT"/>
    <property type="molecule type" value="Genomic_DNA"/>
</dbReference>
<dbReference type="RefSeq" id="WP_001190829.1">
    <property type="nucleotide sequence ID" value="NZ_LS483365.1"/>
</dbReference>
<dbReference type="RefSeq" id="WP_011447044.1">
    <property type="nucleotide sequence ID" value="NC_007795.1"/>
</dbReference>
<dbReference type="RefSeq" id="YP_500777.1">
    <property type="nucleotide sequence ID" value="NC_007795.1"/>
</dbReference>
<dbReference type="SMR" id="Q2FWJ3"/>
<dbReference type="STRING" id="93061.SAOUHSC_02299"/>
<dbReference type="PaxDb" id="1280-SAXN108_2310"/>
<dbReference type="GeneID" id="3919170"/>
<dbReference type="KEGG" id="sao:SAOUHSC_02299"/>
<dbReference type="PATRIC" id="fig|93061.5.peg.2083"/>
<dbReference type="eggNOG" id="COG2172">
    <property type="taxonomic scope" value="Bacteria"/>
</dbReference>
<dbReference type="HOGENOM" id="CLU_090336_11_1_9"/>
<dbReference type="OrthoDB" id="9798941at2"/>
<dbReference type="PRO" id="PR:Q2FWJ3"/>
<dbReference type="Proteomes" id="UP000008816">
    <property type="component" value="Chromosome"/>
</dbReference>
<dbReference type="GO" id="GO:0005524">
    <property type="term" value="F:ATP binding"/>
    <property type="evidence" value="ECO:0007669"/>
    <property type="project" value="UniProtKB-KW"/>
</dbReference>
<dbReference type="GO" id="GO:0106310">
    <property type="term" value="F:protein serine kinase activity"/>
    <property type="evidence" value="ECO:0007669"/>
    <property type="project" value="RHEA"/>
</dbReference>
<dbReference type="GO" id="GO:0004674">
    <property type="term" value="F:protein serine/threonine kinase activity"/>
    <property type="evidence" value="ECO:0007669"/>
    <property type="project" value="UniProtKB-KW"/>
</dbReference>
<dbReference type="GO" id="GO:0016989">
    <property type="term" value="F:sigma factor antagonist activity"/>
    <property type="evidence" value="ECO:0000318"/>
    <property type="project" value="GO_Central"/>
</dbReference>
<dbReference type="GO" id="GO:0045892">
    <property type="term" value="P:negative regulation of DNA-templated transcription"/>
    <property type="evidence" value="ECO:0000318"/>
    <property type="project" value="GO_Central"/>
</dbReference>
<dbReference type="CDD" id="cd16936">
    <property type="entry name" value="HATPase_RsbW-like"/>
    <property type="match status" value="1"/>
</dbReference>
<dbReference type="Gene3D" id="3.30.565.10">
    <property type="entry name" value="Histidine kinase-like ATPase, C-terminal domain"/>
    <property type="match status" value="1"/>
</dbReference>
<dbReference type="HAMAP" id="MF_00638">
    <property type="entry name" value="Anti_sigma_B"/>
    <property type="match status" value="1"/>
</dbReference>
<dbReference type="InterPro" id="IPR050267">
    <property type="entry name" value="Anti-sigma-factor_SerPK"/>
</dbReference>
<dbReference type="InterPro" id="IPR036890">
    <property type="entry name" value="HATPase_C_sf"/>
</dbReference>
<dbReference type="InterPro" id="IPR010193">
    <property type="entry name" value="RsbW"/>
</dbReference>
<dbReference type="NCBIfam" id="NF003144">
    <property type="entry name" value="PRK04069.1"/>
    <property type="match status" value="1"/>
</dbReference>
<dbReference type="NCBIfam" id="TIGR01924">
    <property type="entry name" value="rsbW_low_gc"/>
    <property type="match status" value="1"/>
</dbReference>
<dbReference type="PANTHER" id="PTHR35526">
    <property type="entry name" value="ANTI-SIGMA-F FACTOR RSBW-RELATED"/>
    <property type="match status" value="1"/>
</dbReference>
<dbReference type="PANTHER" id="PTHR35526:SF9">
    <property type="entry name" value="SERINE-PROTEIN KINASE RSBW"/>
    <property type="match status" value="1"/>
</dbReference>
<dbReference type="Pfam" id="PF13581">
    <property type="entry name" value="HATPase_c_2"/>
    <property type="match status" value="1"/>
</dbReference>
<dbReference type="SUPFAM" id="SSF55874">
    <property type="entry name" value="ATPase domain of HSP90 chaperone/DNA topoisomerase II/histidine kinase"/>
    <property type="match status" value="1"/>
</dbReference>
<name>RSBW_STAA8</name>
<feature type="chain" id="PRO_0000249338" description="Serine-protein kinase RsbW">
    <location>
        <begin position="1"/>
        <end position="159"/>
    </location>
</feature>
<feature type="sequence conflict" description="In Ref. 2; AAP42788." evidence="2" ref="2">
    <original>I</original>
    <variation>V</variation>
    <location>
        <position position="81"/>
    </location>
</feature>
<protein>
    <recommendedName>
        <fullName>Serine-protein kinase RsbW</fullName>
        <ecNumber>2.7.11.1</ecNumber>
    </recommendedName>
    <alternativeName>
        <fullName>Anti-sigma-B factor</fullName>
    </alternativeName>
    <alternativeName>
        <fullName>Sigma-B negative effector RsbW</fullName>
    </alternativeName>
</protein>
<accession>Q2FWJ3</accession>
<accession>O08077</accession>
<accession>P0A0H8</accession>
<accession>P95843</accession>
<accession>Q6XZ92</accession>
<accession>Q6XZ96</accession>
<proteinExistence type="inferred from homology"/>
<comment type="function">
    <text evidence="1">Negative regulator of sigma-B activity. Phosphorylates and inactivates its specific antagonist protein, RsbV. Upon phosphorylation of RsbV, RsbW is released and binds to sigma-B, thereby blocking its ability to form an RNA polymerase holoenzyme (E-sigma-B) (By similarity).</text>
</comment>
<comment type="catalytic activity">
    <reaction>
        <text>L-seryl-[protein] + ATP = O-phospho-L-seryl-[protein] + ADP + H(+)</text>
        <dbReference type="Rhea" id="RHEA:17989"/>
        <dbReference type="Rhea" id="RHEA-COMP:9863"/>
        <dbReference type="Rhea" id="RHEA-COMP:11604"/>
        <dbReference type="ChEBI" id="CHEBI:15378"/>
        <dbReference type="ChEBI" id="CHEBI:29999"/>
        <dbReference type="ChEBI" id="CHEBI:30616"/>
        <dbReference type="ChEBI" id="CHEBI:83421"/>
        <dbReference type="ChEBI" id="CHEBI:456216"/>
        <dbReference type="EC" id="2.7.11.1"/>
    </reaction>
</comment>
<comment type="catalytic activity">
    <reaction>
        <text>L-threonyl-[protein] + ATP = O-phospho-L-threonyl-[protein] + ADP + H(+)</text>
        <dbReference type="Rhea" id="RHEA:46608"/>
        <dbReference type="Rhea" id="RHEA-COMP:11060"/>
        <dbReference type="Rhea" id="RHEA-COMP:11605"/>
        <dbReference type="ChEBI" id="CHEBI:15378"/>
        <dbReference type="ChEBI" id="CHEBI:30013"/>
        <dbReference type="ChEBI" id="CHEBI:30616"/>
        <dbReference type="ChEBI" id="CHEBI:61977"/>
        <dbReference type="ChEBI" id="CHEBI:456216"/>
        <dbReference type="EC" id="2.7.11.1"/>
    </reaction>
</comment>
<comment type="similarity">
    <text evidence="2">Belongs to the anti-sigma-factor family.</text>
</comment>
<comment type="sequence caution" evidence="2">
    <conflict type="erroneous initiation">
        <sequence resource="EMBL-CDS" id="ABD31333"/>
    </conflict>
</comment>
<sequence>MQSKEDFIEMRVPASAEYVSLIRLTLSGVFSRAGATYDDIEDAKIAVSEAVTNAVKHAYKENNNVGIINIYFEILEDKIKIVISDKGDSFDYETTKSKIGPYDKDENIDFLREGGLGLFLIESLMDEVTVYKESGVTISMTKYIKKEQVRNNGERVEIS</sequence>
<reference key="1">
    <citation type="journal article" date="1997" name="Arch. Microbiol.">
        <title>The alternative sigma factor sigmaB in Staphylococcus aureus: regulation of the sigB operon in response to growth phase and heat shock.</title>
        <authorList>
            <person name="Kullik I."/>
            <person name="Giachino P."/>
        </authorList>
    </citation>
    <scope>NUCLEOTIDE SEQUENCE [GENOMIC DNA]</scope>
</reference>
<reference key="2">
    <citation type="submission" date="2002-12" db="EMBL/GenBank/DDBJ databases">
        <title>Role of sigB operon in Staphylococcus aureus biofilm formation.</title>
        <authorList>
            <person name="Cramton S.E."/>
            <person name="Doering G."/>
        </authorList>
    </citation>
    <scope>NUCLEOTIDE SEQUENCE [GENOMIC DNA]</scope>
</reference>
<reference key="3">
    <citation type="book" date="2006" name="Gram positive pathogens, 2nd edition">
        <title>The Staphylococcus aureus NCTC 8325 genome.</title>
        <editorList>
            <person name="Fischetti V."/>
            <person name="Novick R."/>
            <person name="Ferretti J."/>
            <person name="Portnoy D."/>
            <person name="Rood J."/>
        </editorList>
        <authorList>
            <person name="Gillaspy A.F."/>
            <person name="Worrell V."/>
            <person name="Orvis J."/>
            <person name="Roe B.A."/>
            <person name="Dyer D.W."/>
            <person name="Iandolo J.J."/>
        </authorList>
    </citation>
    <scope>NUCLEOTIDE SEQUENCE [LARGE SCALE GENOMIC DNA]</scope>
    <source>
        <strain>NCTC 8325 / PS 47</strain>
    </source>
</reference>
<evidence type="ECO:0000250" key="1"/>
<evidence type="ECO:0000305" key="2"/>